<proteinExistence type="evidence at protein level"/>
<gene>
    <name evidence="4" type="primary">OSC1</name>
    <name evidence="5" type="synonym">BAMYR</name>
</gene>
<reference evidence="8" key="1">
    <citation type="submission" date="2012-10" db="EMBL/GenBank/DDBJ databases">
        <title>Studies on biosynthesis of neem limonoids, azadirachtin: A potent antifeedent.</title>
        <authorList>
            <person name="Dandekar D.S."/>
            <person name="Thulasiram H.V."/>
        </authorList>
    </citation>
    <scope>NUCLEOTIDE SEQUENCE [MRNA]</scope>
</reference>
<reference evidence="9" key="2">
    <citation type="journal article" date="2015" name="BMC Plant Biol.">
        <title>Triterpenoid profiling and functional characterization of the initial genes involved in isoprenoid biosynthesis in neem (Azadirachta indica).</title>
        <authorList>
            <person name="Pandreka A."/>
            <person name="Dandekar D.S."/>
            <person name="Haldar S."/>
            <person name="Uttara V."/>
            <person name="Vijayshree S.G."/>
            <person name="Mulani F.A."/>
            <person name="Aarthy T."/>
            <person name="Thulasiram H.V."/>
        </authorList>
    </citation>
    <scope>NUCLEOTIDE SEQUENCE [MRNA]</scope>
</reference>
<reference evidence="10" key="3">
    <citation type="journal article" date="2019" name="Proc. Natl. Acad. Sci. U.S.A.">
        <title>Identification of key enzymes responsible for protolimonoid biosynthesis in plants: Opening the door to azadirachtin production.</title>
        <authorList>
            <person name="Hodgson H."/>
            <person name="De La Pena R."/>
            <person name="Stephenson M.J."/>
            <person name="Thimmappa R."/>
            <person name="Vincent J.L."/>
            <person name="Sattely E.S."/>
            <person name="Osbourn A."/>
        </authorList>
    </citation>
    <scope>NUCLEOTIDE SEQUENCE [MRNA]</scope>
    <scope>FUNCTION</scope>
    <scope>CATALYTIC ACTIVITY</scope>
    <scope>PATHWAY</scope>
    <scope>TISSUE SPECIFICITY</scope>
</reference>
<feature type="chain" id="PRO_0000461332" description="Tirucalladienol synthase OSC1">
    <location>
        <begin position="1"/>
        <end position="760"/>
    </location>
</feature>
<feature type="repeat" description="PFTB 1" evidence="2">
    <location>
        <begin position="99"/>
        <end position="141"/>
    </location>
</feature>
<feature type="repeat" description="PFTB 2" evidence="2">
    <location>
        <begin position="149"/>
        <end position="190"/>
    </location>
</feature>
<feature type="repeat" description="PFTB 3" evidence="2">
    <location>
        <begin position="441"/>
        <end position="485"/>
    </location>
</feature>
<feature type="repeat" description="PFTB 4" evidence="2">
    <location>
        <begin position="515"/>
        <end position="560"/>
    </location>
</feature>
<feature type="repeat" description="PFTB 5" evidence="2">
    <location>
        <begin position="592"/>
        <end position="632"/>
    </location>
</feature>
<feature type="repeat" description="PFTB 6" evidence="2">
    <location>
        <begin position="641"/>
        <end position="689"/>
    </location>
</feature>
<feature type="repeat" description="PFTB 7" evidence="2">
    <location>
        <begin position="703"/>
        <end position="744"/>
    </location>
</feature>
<feature type="active site" description="Proton donor" evidence="1">
    <location>
        <position position="486"/>
    </location>
</feature>
<feature type="sequence conflict" description="In Ref. 1; AGC82084." evidence="6" ref="1">
    <original>L</original>
    <variation>F</variation>
    <location>
        <position position="688"/>
    </location>
</feature>
<feature type="sequence conflict" description="In Ref. 1; AGC82084." evidence="6" ref="1">
    <original>A</original>
    <variation>V</variation>
    <location>
        <position position="696"/>
    </location>
</feature>
<feature type="sequence conflict" description="In Ref. 1; AGC82084." evidence="6" ref="1">
    <original>P</original>
    <variation>S</variation>
    <location>
        <position position="702"/>
    </location>
</feature>
<feature type="sequence conflict" description="In Ref. 1; AGC82084." evidence="6" ref="1">
    <original>Y</original>
    <variation>C</variation>
    <location>
        <position position="752"/>
    </location>
</feature>
<protein>
    <recommendedName>
        <fullName evidence="7">Tirucalladienol synthase OSC1</fullName>
        <ecNumber evidence="3">5.4.99.56</ecNumber>
    </recommendedName>
    <alternativeName>
        <fullName evidence="5">Beta-amyrin synthase</fullName>
    </alternativeName>
    <alternativeName>
        <fullName evidence="4">Oxidosqualene cyclase 1</fullName>
        <shortName evidence="4">AiOSC1</shortName>
    </alternativeName>
</protein>
<name>OSC1_AZAIN</name>
<evidence type="ECO:0000250" key="1">
    <source>
        <dbReference type="UniProtKB" id="P48449"/>
    </source>
</evidence>
<evidence type="ECO:0000255" key="2"/>
<evidence type="ECO:0000269" key="3">
    <source>
    </source>
</evidence>
<evidence type="ECO:0000303" key="4">
    <source>
    </source>
</evidence>
<evidence type="ECO:0000303" key="5">
    <source ref="1"/>
</evidence>
<evidence type="ECO:0000305" key="6"/>
<evidence type="ECO:0000305" key="7">
    <source>
    </source>
</evidence>
<evidence type="ECO:0000312" key="8">
    <source>
        <dbReference type="EMBL" id="AGC82084.1"/>
    </source>
</evidence>
<evidence type="ECO:0000312" key="9">
    <source>
        <dbReference type="EMBL" id="QBZ67152.1"/>
    </source>
</evidence>
<evidence type="ECO:0000312" key="10">
    <source>
        <dbReference type="EMBL" id="QDZ36305.1"/>
    </source>
</evidence>
<organism>
    <name type="scientific">Azadirachta indica</name>
    <name type="common">Neem tree</name>
    <name type="synonym">Melia azadirachta</name>
    <dbReference type="NCBI Taxonomy" id="124943"/>
    <lineage>
        <taxon>Eukaryota</taxon>
        <taxon>Viridiplantae</taxon>
        <taxon>Streptophyta</taxon>
        <taxon>Embryophyta</taxon>
        <taxon>Tracheophyta</taxon>
        <taxon>Spermatophyta</taxon>
        <taxon>Magnoliopsida</taxon>
        <taxon>eudicotyledons</taxon>
        <taxon>Gunneridae</taxon>
        <taxon>Pentapetalae</taxon>
        <taxon>rosids</taxon>
        <taxon>malvids</taxon>
        <taxon>Sapindales</taxon>
        <taxon>Meliaceae</taxon>
        <taxon>Azadirachta</taxon>
    </lineage>
</organism>
<accession>A0A5B8NBN0</accession>
<accession>L7WI23</accession>
<comment type="function">
    <text evidence="3">Oxidosqualene cyclase involved in the biosynthesis of limonoids triterpene natural products such as azadirachtin, an antifeedant widely used as bioinsecticide, and possessing many medicinal applications including anti-tumoral, anti-malarial, anti-rheumatic, antibacterial, anti-inflammatory, anti-pyretic and diuretic effects (PubMed:31371503). Converts 2,3-oxidosqualene (2,3-epoxysqualene) into tirucalladienol, generating rings and asymmetric centers in a single transformation (PubMed:31371503).</text>
</comment>
<comment type="catalytic activity">
    <reaction evidence="3">
        <text>(S)-2,3-epoxysqualene = tirucalla-7,24-dien-3beta-ol</text>
        <dbReference type="Rhea" id="RHEA:31887"/>
        <dbReference type="ChEBI" id="CHEBI:15441"/>
        <dbReference type="ChEBI" id="CHEBI:63468"/>
        <dbReference type="EC" id="5.4.99.56"/>
    </reaction>
    <physiologicalReaction direction="left-to-right" evidence="3">
        <dbReference type="Rhea" id="RHEA:31888"/>
    </physiologicalReaction>
</comment>
<comment type="pathway">
    <text evidence="3">Secondary metabolite biosynthesis; terpenoid biosynthesis.</text>
</comment>
<comment type="tissue specificity">
    <text evidence="3">Mainly expressed in fruits.</text>
</comment>
<comment type="similarity">
    <text evidence="6">Belongs to the terpene cyclase/mutase family.</text>
</comment>
<dbReference type="EC" id="5.4.99.56" evidence="3"/>
<dbReference type="EMBL" id="JX997149">
    <property type="protein sequence ID" value="AGC82084.1"/>
    <property type="molecule type" value="mRNA"/>
</dbReference>
<dbReference type="EMBL" id="MH807380">
    <property type="protein sequence ID" value="QBZ67152.1"/>
    <property type="molecule type" value="mRNA"/>
</dbReference>
<dbReference type="EMBL" id="MK803262">
    <property type="protein sequence ID" value="QDZ36305.1"/>
    <property type="molecule type" value="mRNA"/>
</dbReference>
<dbReference type="SMR" id="A0A5B8NBN0"/>
<dbReference type="UniPathway" id="UPA00213"/>
<dbReference type="GO" id="GO:0005811">
    <property type="term" value="C:lipid droplet"/>
    <property type="evidence" value="ECO:0007669"/>
    <property type="project" value="InterPro"/>
</dbReference>
<dbReference type="GO" id="GO:0042300">
    <property type="term" value="F:beta-amyrin synthase activity"/>
    <property type="evidence" value="ECO:0007669"/>
    <property type="project" value="TreeGrafter"/>
</dbReference>
<dbReference type="GO" id="GO:0016104">
    <property type="term" value="P:triterpenoid biosynthetic process"/>
    <property type="evidence" value="ECO:0007669"/>
    <property type="project" value="InterPro"/>
</dbReference>
<dbReference type="CDD" id="cd02892">
    <property type="entry name" value="SQCY_1"/>
    <property type="match status" value="1"/>
</dbReference>
<dbReference type="FunFam" id="1.50.10.20:FF:000044">
    <property type="entry name" value="Lupeol synthase"/>
    <property type="match status" value="1"/>
</dbReference>
<dbReference type="FunFam" id="1.50.10.20:FF:000011">
    <property type="entry name" value="Terpene cyclase/mutase family member"/>
    <property type="match status" value="1"/>
</dbReference>
<dbReference type="Gene3D" id="1.50.10.20">
    <property type="match status" value="2"/>
</dbReference>
<dbReference type="InterPro" id="IPR032696">
    <property type="entry name" value="SQ_cyclase_C"/>
</dbReference>
<dbReference type="InterPro" id="IPR032697">
    <property type="entry name" value="SQ_cyclase_N"/>
</dbReference>
<dbReference type="InterPro" id="IPR018333">
    <property type="entry name" value="Squalene_cyclase"/>
</dbReference>
<dbReference type="InterPro" id="IPR002365">
    <property type="entry name" value="Terpene_synthase_CS"/>
</dbReference>
<dbReference type="InterPro" id="IPR008930">
    <property type="entry name" value="Terpenoid_cyclase/PrenylTrfase"/>
</dbReference>
<dbReference type="NCBIfam" id="TIGR01787">
    <property type="entry name" value="squalene_cyclas"/>
    <property type="match status" value="1"/>
</dbReference>
<dbReference type="PANTHER" id="PTHR11764:SF58">
    <property type="entry name" value="BETA-AMYRIN SYNTHASE-RELATED"/>
    <property type="match status" value="1"/>
</dbReference>
<dbReference type="PANTHER" id="PTHR11764">
    <property type="entry name" value="TERPENE CYCLASE/MUTASE FAMILY MEMBER"/>
    <property type="match status" value="1"/>
</dbReference>
<dbReference type="Pfam" id="PF13243">
    <property type="entry name" value="SQHop_cyclase_C"/>
    <property type="match status" value="1"/>
</dbReference>
<dbReference type="Pfam" id="PF13249">
    <property type="entry name" value="SQHop_cyclase_N"/>
    <property type="match status" value="1"/>
</dbReference>
<dbReference type="SFLD" id="SFLDG01016">
    <property type="entry name" value="Prenyltransferase_Like_2"/>
    <property type="match status" value="1"/>
</dbReference>
<dbReference type="SUPFAM" id="SSF48239">
    <property type="entry name" value="Terpenoid cyclases/Protein prenyltransferases"/>
    <property type="match status" value="2"/>
</dbReference>
<dbReference type="PROSITE" id="PS01074">
    <property type="entry name" value="TERPENE_SYNTHASES"/>
    <property type="match status" value="1"/>
</dbReference>
<sequence>MWKLKIAEGDKNSPYISTTNNFVGRQIWEFDPNAGTAEELAEVEEARQNFYKNRHQVKPASDLIFRLQFLREKNFKQTIPQVKVEDGEEITYDTATAAMKRAAHYFSAIQASDGHWPAENSGPMYFLPPFVFCLYITGHLDTVFTAAHRREVLRYLYNHQHEDGGWGIHIEAPSSMFGTVYSYLTMRLLGLGPNDGENNACARARKWIRDNGGVTYIPSWGKNWLSILGLFEWAGTHPMPPEFWMLPSHFPLHPAQMWCFCRLVYMPLCYLYGKRFVGPITPLIKQLREELHTEPYDKINWRKVRHQCAKTDLYYPHPFVQEVLWDTLYFATEPLLTRWPLNKYVREKALKQTMKIIHYEDQSSRYITIGCVEKPLCMLACWVEDPEGVAFKKHLERIADFIWIGEDGMKVQTFGSQTWDTALGLQALLACNIVDEIGPALAKGHDYLKKAQVRDNPVGDYTSNFRHFSKGAWTFSDQDHGWQVSDCTAESLKCCLHFSMLPPEIVGEKHDPERLYEAVNFILSLQDKNGGIAVWEKAGASLMLEWLNPVEFLEDLIVEHTYVECTASAIEAFVMFKKLYPHHRKKEIENFLVKAVQYIENEQTADGSWYGNWGVCFLYGTCFALGGLHAAGKTYNNCLAIRRAVEFLLQAQSDDGGWGESYKSCPSKIYVPLDGKRSTVVHTALAILGLIHAGQAERDPTPIHRGVKLLINSQLENGDFPQQEIMGVFMRNCMLHYAQYRNIFPLWALAEYRRKVPLPN</sequence>
<keyword id="KW-0413">Isomerase</keyword>
<keyword id="KW-0677">Repeat</keyword>